<reference key="1">
    <citation type="submission" date="2004-07" db="EMBL/GenBank/DDBJ databases">
        <authorList>
            <consortium name="NIH - Xenopus Gene Collection (XGC) project"/>
        </authorList>
    </citation>
    <scope>NUCLEOTIDE SEQUENCE [LARGE SCALE MRNA]</scope>
    <source>
        <tissue>Ovary</tissue>
    </source>
</reference>
<accession>Q6DE92</accession>
<dbReference type="EMBL" id="BC077242">
    <property type="protein sequence ID" value="AAH77242.1"/>
    <property type="molecule type" value="mRNA"/>
</dbReference>
<dbReference type="RefSeq" id="NP_001086655.1">
    <property type="nucleotide sequence ID" value="NM_001093186.1"/>
</dbReference>
<dbReference type="SMR" id="Q6DE92"/>
<dbReference type="GlyCosmos" id="Q6DE92">
    <property type="glycosylation" value="6 sites, No reported glycans"/>
</dbReference>
<dbReference type="DNASU" id="446490"/>
<dbReference type="GeneID" id="446490"/>
<dbReference type="KEGG" id="xla:446490"/>
<dbReference type="AGR" id="Xenbase:XB-GENE-856534"/>
<dbReference type="CTD" id="446490"/>
<dbReference type="Xenbase" id="XB-GENE-856534">
    <property type="gene designation" value="plxdc2.S"/>
</dbReference>
<dbReference type="OrthoDB" id="6285106at2759"/>
<dbReference type="Proteomes" id="UP000186698">
    <property type="component" value="Chromosome 6S"/>
</dbReference>
<dbReference type="Bgee" id="446490">
    <property type="expression patterns" value="Expressed in ovary and 16 other cell types or tissues"/>
</dbReference>
<dbReference type="GO" id="GO:0016020">
    <property type="term" value="C:membrane"/>
    <property type="evidence" value="ECO:0007669"/>
    <property type="project" value="UniProtKB-SubCell"/>
</dbReference>
<dbReference type="InterPro" id="IPR002165">
    <property type="entry name" value="Plexin_repeat"/>
</dbReference>
<dbReference type="InterPro" id="IPR031152">
    <property type="entry name" value="PLXDC"/>
</dbReference>
<dbReference type="InterPro" id="IPR016201">
    <property type="entry name" value="PSI"/>
</dbReference>
<dbReference type="PANTHER" id="PTHR13055:SF11">
    <property type="entry name" value="PLEXIN DOMAIN-CONTAINING PROTEIN 2"/>
    <property type="match status" value="1"/>
</dbReference>
<dbReference type="PANTHER" id="PTHR13055">
    <property type="entry name" value="TUMOR ENDOTHELIAL MARKER 7 RELATED"/>
    <property type="match status" value="1"/>
</dbReference>
<dbReference type="Pfam" id="PF01437">
    <property type="entry name" value="PSI"/>
    <property type="match status" value="1"/>
</dbReference>
<dbReference type="SMART" id="SM00423">
    <property type="entry name" value="PSI"/>
    <property type="match status" value="1"/>
</dbReference>
<comment type="subcellular location">
    <subcellularLocation>
        <location evidence="2">Membrane</location>
        <topology evidence="2">Single-pass type I membrane protein</topology>
    </subcellularLocation>
</comment>
<comment type="similarity">
    <text evidence="2">Belongs to the plexin family.</text>
</comment>
<organism>
    <name type="scientific">Xenopus laevis</name>
    <name type="common">African clawed frog</name>
    <dbReference type="NCBI Taxonomy" id="8355"/>
    <lineage>
        <taxon>Eukaryota</taxon>
        <taxon>Metazoa</taxon>
        <taxon>Chordata</taxon>
        <taxon>Craniata</taxon>
        <taxon>Vertebrata</taxon>
        <taxon>Euteleostomi</taxon>
        <taxon>Amphibia</taxon>
        <taxon>Batrachia</taxon>
        <taxon>Anura</taxon>
        <taxon>Pipoidea</taxon>
        <taxon>Pipidae</taxon>
        <taxon>Xenopodinae</taxon>
        <taxon>Xenopus</taxon>
        <taxon>Xenopus</taxon>
    </lineage>
</organism>
<proteinExistence type="evidence at transcript level"/>
<keyword id="KW-0325">Glycoprotein</keyword>
<keyword id="KW-0472">Membrane</keyword>
<keyword id="KW-1185">Reference proteome</keyword>
<keyword id="KW-0732">Signal</keyword>
<keyword id="KW-0812">Transmembrane</keyword>
<keyword id="KW-1133">Transmembrane helix</keyword>
<evidence type="ECO:0000255" key="1"/>
<evidence type="ECO:0000305" key="2"/>
<name>PXDC2_XENLA</name>
<protein>
    <recommendedName>
        <fullName>Plexin domain-containing protein 2</fullName>
    </recommendedName>
</protein>
<sequence>MGARSESLVGVVLLFQLLADRLWCAATASDSLYDVSYSITAIKPRVDEMVSVDTHMYSHRWKRQSVDTNRPSVGQDFPDMFLEGTNENGTEIEEDTDHKYYTSRTYGPLDSASRDLWVNIDQMEKEKVKIHGILSNTHRQAARVNLSFDFPFYGHFLREITVATGGFIYTGEVVHRMLTATQYIAPLMANFDPSVSRNSTVRYFDNGTALVVQWDHVHLRDNYSLGSFTFQATLINDGRIVFGYKDIPVPVMQISSTNHPVKVGLSDAFVVVHKIQQIPNVRRRTIFEYHRVELEMTKITSFSAVEMLPLATCLQFNSCSSCVSSMIGFNCSWCNIPQRCSSGFDRHRQDWVENGCTEESKDTVCDDLLQTTGISHHTTTGLHATTSIYAFTTTTRMASHFPSNLPTEDDTKIALHLKDNGASTDNSAAEMKTGTLHTGLIIGILILVLLIITAILVAVYMYHHPTSSASLFLIERRPSRWPAMKFRRGSGHPAYAEVEPIGEKEGFIVSEQC</sequence>
<feature type="signal peptide" evidence="1">
    <location>
        <begin position="1"/>
        <end position="24"/>
    </location>
</feature>
<feature type="chain" id="PRO_0000234576" description="Plexin domain-containing protein 2">
    <location>
        <begin position="25"/>
        <end position="513"/>
    </location>
</feature>
<feature type="topological domain" description="Extracellular" evidence="1">
    <location>
        <begin position="25"/>
        <end position="438"/>
    </location>
</feature>
<feature type="transmembrane region" description="Helical" evidence="1">
    <location>
        <begin position="439"/>
        <end position="459"/>
    </location>
</feature>
<feature type="topological domain" description="Cytoplasmic" evidence="1">
    <location>
        <begin position="460"/>
        <end position="513"/>
    </location>
</feature>
<feature type="domain" description="PSI">
    <location>
        <begin position="312"/>
        <end position="357"/>
    </location>
</feature>
<feature type="glycosylation site" description="N-linked (GlcNAc...) asparagine" evidence="1">
    <location>
        <position position="88"/>
    </location>
</feature>
<feature type="glycosylation site" description="N-linked (GlcNAc...) asparagine" evidence="1">
    <location>
        <position position="145"/>
    </location>
</feature>
<feature type="glycosylation site" description="N-linked (GlcNAc...) asparagine" evidence="1">
    <location>
        <position position="198"/>
    </location>
</feature>
<feature type="glycosylation site" description="N-linked (GlcNAc...) asparagine" evidence="1">
    <location>
        <position position="206"/>
    </location>
</feature>
<feature type="glycosylation site" description="N-linked (GlcNAc...) asparagine" evidence="1">
    <location>
        <position position="222"/>
    </location>
</feature>
<feature type="glycosylation site" description="N-linked (GlcNAc...) asparagine" evidence="1">
    <location>
        <position position="330"/>
    </location>
</feature>
<gene>
    <name type="primary">plxdc2</name>
</gene>